<comment type="function">
    <text>Transcriptional repressor for the ribose rbsDACBK operon. RbsR binds to a region of perfect dyad symmetry spanning the rbs operon transcriptional start site. The affinity for the rbs operator is reduced by addition of ribose, consistent with ribose being the inducer of the operon.</text>
</comment>
<comment type="interaction">
    <interactant intactId="EBI-1119646">
        <id>P0ACQ0</id>
    </interactant>
    <interactant intactId="EBI-1120353">
        <id>Q46864</id>
        <label>mqsA</label>
    </interactant>
    <organismsDiffer>false</organismsDiffer>
    <experiments>3</experiments>
</comment>
<comment type="sequence caution" evidence="3">
    <conflict type="erroneous initiation">
        <sequence resource="EMBL-CDS" id="AAA62106"/>
    </conflict>
</comment>
<proteinExistence type="evidence at protein level"/>
<reference key="1">
    <citation type="journal article" date="1992" name="Protein Sci.">
        <title>Structural and functional analyses of the repressor, RbsR, of the ribose operon of Escherichia coli.</title>
        <authorList>
            <person name="Mauzy C.A."/>
            <person name="Hermodson M.A."/>
        </authorList>
    </citation>
    <scope>NUCLEOTIDE SEQUENCE [GENOMIC DNA]</scope>
    <scope>PROTEIN SEQUENCE OF 2-7 AND 251-257</scope>
    <source>
        <strain>K12</strain>
    </source>
</reference>
<reference key="2">
    <citation type="submission" date="1991-06" db="EMBL/GenBank/DDBJ databases">
        <title>Characterization of rbsR: the repressor gene for ribose operon in Escherichia coli.</title>
        <authorList>
            <person name="Iida A."/>
            <person name="Teshiba S."/>
            <person name="Mizobuchi K."/>
        </authorList>
    </citation>
    <scope>NUCLEOTIDE SEQUENCE [GENOMIC DNA]</scope>
    <source>
        <strain>K12</strain>
    </source>
</reference>
<reference key="3">
    <citation type="journal article" date="1993" name="Genomics">
        <title>DNA sequence and analysis of 136 kilobases of the Escherichia coli genome: organizational symmetry around the origin of replication.</title>
        <authorList>
            <person name="Burland V.D."/>
            <person name="Plunkett G. III"/>
            <person name="Daniels D.L."/>
            <person name="Blattner F.R."/>
        </authorList>
    </citation>
    <scope>NUCLEOTIDE SEQUENCE [LARGE SCALE GENOMIC DNA]</scope>
    <source>
        <strain>K12 / MG1655 / ATCC 47076</strain>
    </source>
</reference>
<reference key="4">
    <citation type="journal article" date="1997" name="Science">
        <title>The complete genome sequence of Escherichia coli K-12.</title>
        <authorList>
            <person name="Blattner F.R."/>
            <person name="Plunkett G. III"/>
            <person name="Bloch C.A."/>
            <person name="Perna N.T."/>
            <person name="Burland V."/>
            <person name="Riley M."/>
            <person name="Collado-Vides J."/>
            <person name="Glasner J.D."/>
            <person name="Rode C.K."/>
            <person name="Mayhew G.F."/>
            <person name="Gregor J."/>
            <person name="Davis N.W."/>
            <person name="Kirkpatrick H.A."/>
            <person name="Goeden M.A."/>
            <person name="Rose D.J."/>
            <person name="Mau B."/>
            <person name="Shao Y."/>
        </authorList>
    </citation>
    <scope>NUCLEOTIDE SEQUENCE [LARGE SCALE GENOMIC DNA]</scope>
    <source>
        <strain>K12 / MG1655 / ATCC 47076</strain>
    </source>
</reference>
<reference key="5">
    <citation type="journal article" date="2006" name="Mol. Syst. Biol.">
        <title>Highly accurate genome sequences of Escherichia coli K-12 strains MG1655 and W3110.</title>
        <authorList>
            <person name="Hayashi K."/>
            <person name="Morooka N."/>
            <person name="Yamamoto Y."/>
            <person name="Fujita K."/>
            <person name="Isono K."/>
            <person name="Choi S."/>
            <person name="Ohtsubo E."/>
            <person name="Baba T."/>
            <person name="Wanner B.L."/>
            <person name="Mori H."/>
            <person name="Horiuchi T."/>
        </authorList>
    </citation>
    <scope>NUCLEOTIDE SEQUENCE [LARGE SCALE GENOMIC DNA]</scope>
    <source>
        <strain>K12 / W3110 / ATCC 27325 / DSM 5911</strain>
    </source>
</reference>
<reference key="6">
    <citation type="journal article" date="1992" name="Protein Sci.">
        <title>Structural homology between rbs repressor and ribose binding protein implies functional similarity.</title>
        <authorList>
            <person name="Mauzy C.A."/>
            <person name="Hermodson M.A."/>
        </authorList>
    </citation>
    <scope>SIMILARITY TO RIBOSE-BINDING PROTEINS</scope>
</reference>
<dbReference type="EMBL" id="M13169">
    <property type="protein sequence ID" value="AAA51477.1"/>
    <property type="molecule type" value="Genomic_DNA"/>
</dbReference>
<dbReference type="EMBL" id="D10466">
    <property type="protein sequence ID" value="BAA01259.1"/>
    <property type="molecule type" value="Genomic_DNA"/>
</dbReference>
<dbReference type="EMBL" id="L10328">
    <property type="protein sequence ID" value="AAA62106.1"/>
    <property type="status" value="ALT_INIT"/>
    <property type="molecule type" value="Genomic_DNA"/>
</dbReference>
<dbReference type="EMBL" id="U00096">
    <property type="protein sequence ID" value="AAC76776.1"/>
    <property type="molecule type" value="Genomic_DNA"/>
</dbReference>
<dbReference type="EMBL" id="AP009048">
    <property type="protein sequence ID" value="BAE77535.1"/>
    <property type="molecule type" value="Genomic_DNA"/>
</dbReference>
<dbReference type="PIR" id="B65179">
    <property type="entry name" value="B65179"/>
</dbReference>
<dbReference type="RefSeq" id="NP_418209.1">
    <property type="nucleotide sequence ID" value="NC_000913.3"/>
</dbReference>
<dbReference type="RefSeq" id="WP_000224470.1">
    <property type="nucleotide sequence ID" value="NZ_SSZK01000036.1"/>
</dbReference>
<dbReference type="SMR" id="P0ACQ0"/>
<dbReference type="BioGRID" id="4261326">
    <property type="interactions" value="125"/>
</dbReference>
<dbReference type="BioGRID" id="852568">
    <property type="interactions" value="1"/>
</dbReference>
<dbReference type="FunCoup" id="P0ACQ0">
    <property type="interactions" value="187"/>
</dbReference>
<dbReference type="IntAct" id="P0ACQ0">
    <property type="interactions" value="5"/>
</dbReference>
<dbReference type="STRING" id="511145.b3753"/>
<dbReference type="jPOST" id="P0ACQ0"/>
<dbReference type="PaxDb" id="511145-b3753"/>
<dbReference type="EnsemblBacteria" id="AAC76776">
    <property type="protein sequence ID" value="AAC76776"/>
    <property type="gene ID" value="b3753"/>
</dbReference>
<dbReference type="GeneID" id="75173987"/>
<dbReference type="GeneID" id="948266"/>
<dbReference type="KEGG" id="ecj:JW3732"/>
<dbReference type="KEGG" id="eco:b3753"/>
<dbReference type="PATRIC" id="fig|1411691.4.peg.2947"/>
<dbReference type="EchoBASE" id="EB0812"/>
<dbReference type="eggNOG" id="COG1609">
    <property type="taxonomic scope" value="Bacteria"/>
</dbReference>
<dbReference type="HOGENOM" id="CLU_037628_6_2_6"/>
<dbReference type="InParanoid" id="P0ACQ0"/>
<dbReference type="OMA" id="FAGNDAM"/>
<dbReference type="OrthoDB" id="9798934at2"/>
<dbReference type="PhylomeDB" id="P0ACQ0"/>
<dbReference type="BioCyc" id="EcoCyc:PD03867"/>
<dbReference type="PRO" id="PR:P0ACQ0"/>
<dbReference type="Proteomes" id="UP000000625">
    <property type="component" value="Chromosome"/>
</dbReference>
<dbReference type="GO" id="GO:0000987">
    <property type="term" value="F:cis-regulatory region sequence-specific DNA binding"/>
    <property type="evidence" value="ECO:0000314"/>
    <property type="project" value="EcoCyc"/>
</dbReference>
<dbReference type="GO" id="GO:0001216">
    <property type="term" value="F:DNA-binding transcription activator activity"/>
    <property type="evidence" value="ECO:0000314"/>
    <property type="project" value="EcoCyc"/>
</dbReference>
<dbReference type="GO" id="GO:0003700">
    <property type="term" value="F:DNA-binding transcription factor activity"/>
    <property type="evidence" value="ECO:0000318"/>
    <property type="project" value="GO_Central"/>
</dbReference>
<dbReference type="GO" id="GO:0048029">
    <property type="term" value="F:monosaccharide binding"/>
    <property type="evidence" value="ECO:0000270"/>
    <property type="project" value="EcoCyc"/>
</dbReference>
<dbReference type="GO" id="GO:0000976">
    <property type="term" value="F:transcription cis-regulatory region binding"/>
    <property type="evidence" value="ECO:0000318"/>
    <property type="project" value="GO_Central"/>
</dbReference>
<dbReference type="GO" id="GO:0045893">
    <property type="term" value="P:positive regulation of DNA-templated transcription"/>
    <property type="evidence" value="ECO:0000270"/>
    <property type="project" value="EcoCyc"/>
</dbReference>
<dbReference type="GO" id="GO:0006355">
    <property type="term" value="P:regulation of DNA-templated transcription"/>
    <property type="evidence" value="ECO:0000318"/>
    <property type="project" value="GO_Central"/>
</dbReference>
<dbReference type="CDD" id="cd01392">
    <property type="entry name" value="HTH_LacI"/>
    <property type="match status" value="1"/>
</dbReference>
<dbReference type="CDD" id="cd06275">
    <property type="entry name" value="PBP1_PurR"/>
    <property type="match status" value="1"/>
</dbReference>
<dbReference type="FunFam" id="1.10.260.40:FF:000002">
    <property type="entry name" value="HTH-type transcriptional repressor PurR"/>
    <property type="match status" value="1"/>
</dbReference>
<dbReference type="Gene3D" id="3.40.50.2300">
    <property type="match status" value="2"/>
</dbReference>
<dbReference type="Gene3D" id="1.10.260.40">
    <property type="entry name" value="lambda repressor-like DNA-binding domains"/>
    <property type="match status" value="1"/>
</dbReference>
<dbReference type="InterPro" id="IPR000843">
    <property type="entry name" value="HTH_LacI"/>
</dbReference>
<dbReference type="InterPro" id="IPR046335">
    <property type="entry name" value="LacI/GalR-like_sensor"/>
</dbReference>
<dbReference type="InterPro" id="IPR010982">
    <property type="entry name" value="Lambda_DNA-bd_dom_sf"/>
</dbReference>
<dbReference type="InterPro" id="IPR028082">
    <property type="entry name" value="Peripla_BP_I"/>
</dbReference>
<dbReference type="NCBIfam" id="NF007743">
    <property type="entry name" value="PRK10423.1"/>
    <property type="match status" value="1"/>
</dbReference>
<dbReference type="PANTHER" id="PTHR30146">
    <property type="entry name" value="LACI-RELATED TRANSCRIPTIONAL REPRESSOR"/>
    <property type="match status" value="1"/>
</dbReference>
<dbReference type="PANTHER" id="PTHR30146:SF145">
    <property type="entry name" value="RIBOSE OPERON REPRESSOR"/>
    <property type="match status" value="1"/>
</dbReference>
<dbReference type="Pfam" id="PF00356">
    <property type="entry name" value="LacI"/>
    <property type="match status" value="1"/>
</dbReference>
<dbReference type="Pfam" id="PF13377">
    <property type="entry name" value="Peripla_BP_3"/>
    <property type="match status" value="1"/>
</dbReference>
<dbReference type="PRINTS" id="PR00036">
    <property type="entry name" value="HTHLACI"/>
</dbReference>
<dbReference type="SMART" id="SM00354">
    <property type="entry name" value="HTH_LACI"/>
    <property type="match status" value="1"/>
</dbReference>
<dbReference type="SUPFAM" id="SSF47413">
    <property type="entry name" value="lambda repressor-like DNA-binding domains"/>
    <property type="match status" value="1"/>
</dbReference>
<dbReference type="SUPFAM" id="SSF53822">
    <property type="entry name" value="Periplasmic binding protein-like I"/>
    <property type="match status" value="1"/>
</dbReference>
<dbReference type="PROSITE" id="PS00356">
    <property type="entry name" value="HTH_LACI_1"/>
    <property type="match status" value="1"/>
</dbReference>
<dbReference type="PROSITE" id="PS50932">
    <property type="entry name" value="HTH_LACI_2"/>
    <property type="match status" value="1"/>
</dbReference>
<feature type="initiator methionine" description="Removed" evidence="2">
    <location>
        <position position="1"/>
    </location>
</feature>
<feature type="chain" id="PRO_0000107985" description="Ribose operon repressor">
    <location>
        <begin position="2"/>
        <end position="330"/>
    </location>
</feature>
<feature type="domain" description="HTH lacI-type" evidence="1">
    <location>
        <begin position="2"/>
        <end position="56"/>
    </location>
</feature>
<feature type="DNA-binding region" description="H-T-H motif" evidence="1">
    <location>
        <begin position="4"/>
        <end position="23"/>
    </location>
</feature>
<feature type="sequence conflict" description="In Ref. 1; AAA51477." evidence="3" ref="1">
    <original>GV</original>
    <variation>L</variation>
    <location>
        <begin position="12"/>
        <end position="13"/>
    </location>
</feature>
<name>RBSR_ECOLI</name>
<sequence>MATMKDVARLAGVSTSTVSHVINKDRFVSEAITAKVEAAIKELNYAPSALARSLKLNQTHTIGMLITASTNPFYSELVRGVERSCFERGYSLVLCNTEGDEQRMNRNLETLMQKRVDGLLLLCTETHQPSREIMQRYPTVPTVMMDWAPFDGDSDLIQDNSLLGGDLATQYLIDKGHTRIACITGPLDKTPARLRLEGYRAAMKRAGLNIPDGYEVTGDFEFNGGFDAMRQLLSHPLRPQAVFTGNDAMAVGVYQALYQAELQVPQDIAVIGYDDIELASFMTPPLTTIHQPKDELGELAIDVLIHRITQPTLQQQRLQLTPILMERGSA</sequence>
<organism>
    <name type="scientific">Escherichia coli (strain K12)</name>
    <dbReference type="NCBI Taxonomy" id="83333"/>
    <lineage>
        <taxon>Bacteria</taxon>
        <taxon>Pseudomonadati</taxon>
        <taxon>Pseudomonadota</taxon>
        <taxon>Gammaproteobacteria</taxon>
        <taxon>Enterobacterales</taxon>
        <taxon>Enterobacteriaceae</taxon>
        <taxon>Escherichia</taxon>
    </lineage>
</organism>
<keyword id="KW-0903">Direct protein sequencing</keyword>
<keyword id="KW-0238">DNA-binding</keyword>
<keyword id="KW-1185">Reference proteome</keyword>
<keyword id="KW-0678">Repressor</keyword>
<keyword id="KW-0804">Transcription</keyword>
<keyword id="KW-0805">Transcription regulation</keyword>
<evidence type="ECO:0000255" key="1">
    <source>
        <dbReference type="PROSITE-ProRule" id="PRU00111"/>
    </source>
</evidence>
<evidence type="ECO:0000269" key="2">
    <source>
    </source>
</evidence>
<evidence type="ECO:0000305" key="3"/>
<protein>
    <recommendedName>
        <fullName>Ribose operon repressor</fullName>
    </recommendedName>
</protein>
<accession>P0ACQ0</accession>
<accession>P25551</accession>
<accession>Q2M871</accession>
<gene>
    <name type="primary">rbsR</name>
    <name type="ordered locus">b3753</name>
    <name type="ordered locus">JW3732</name>
</gene>